<comment type="function">
    <text evidence="1">Catalyzes the reduction of FMN to FMNH2 which is used to reduce pyrimidine by RutA via the Rut pathway.</text>
</comment>
<comment type="catalytic activity">
    <reaction evidence="1">
        <text>FMNH2 + NAD(+) = FMN + NADH + 2 H(+)</text>
        <dbReference type="Rhea" id="RHEA:21620"/>
        <dbReference type="ChEBI" id="CHEBI:15378"/>
        <dbReference type="ChEBI" id="CHEBI:57540"/>
        <dbReference type="ChEBI" id="CHEBI:57618"/>
        <dbReference type="ChEBI" id="CHEBI:57945"/>
        <dbReference type="ChEBI" id="CHEBI:58210"/>
        <dbReference type="EC" id="1.5.1.42"/>
    </reaction>
</comment>
<comment type="similarity">
    <text evidence="1">Belongs to the non-flavoprotein flavin reductase family. RutF subfamily.</text>
</comment>
<gene>
    <name evidence="1" type="primary">rutF</name>
    <name type="ordered locus">Kvar_3346</name>
</gene>
<keyword id="KW-0285">Flavoprotein</keyword>
<keyword id="KW-0288">FMN</keyword>
<keyword id="KW-0520">NAD</keyword>
<keyword id="KW-0560">Oxidoreductase</keyword>
<accession>D3RKL5</accession>
<sequence>MELADKASFRDAMAHVGAAVNIITTDGPAGRAGFTASAVCSVTDTPPTLLVCLNRSASVWPVFSEHHTLCVNTLAAGQEALSTLFGGKTAMDERFAAADWQTGATGCPRLEAALVSFDCRIDQRVSVGTHDILFCHVVAITRHPEPRGLMWFDRGYHTLMRPAC</sequence>
<protein>
    <recommendedName>
        <fullName evidence="1">FMN reductase (NADH) RutF</fullName>
        <ecNumber evidence="1">1.5.1.42</ecNumber>
    </recommendedName>
    <alternativeName>
        <fullName evidence="1">FMN reductase</fullName>
    </alternativeName>
    <alternativeName>
        <fullName evidence="1">NADH-flavin reductase RutF</fullName>
    </alternativeName>
    <alternativeName>
        <fullName evidence="1">NADH:flavin oxidoreductase</fullName>
    </alternativeName>
</protein>
<feature type="chain" id="PRO_0000403030" description="FMN reductase (NADH) RutF">
    <location>
        <begin position="1"/>
        <end position="164"/>
    </location>
</feature>
<reference key="1">
    <citation type="submission" date="2010-02" db="EMBL/GenBank/DDBJ databases">
        <title>Complete sequence of Klebsiella variicola At-22.</title>
        <authorList>
            <consortium name="US DOE Joint Genome Institute"/>
            <person name="Lucas S."/>
            <person name="Copeland A."/>
            <person name="Lapidus A."/>
            <person name="Cheng J.-F."/>
            <person name="Bruce D."/>
            <person name="Goodwin L."/>
            <person name="Pitluck S."/>
            <person name="Davenport K."/>
            <person name="Brettin T."/>
            <person name="Detter J.C."/>
            <person name="Han C."/>
            <person name="Tapia R."/>
            <person name="Larimer F."/>
            <person name="Land M."/>
            <person name="Hauser L."/>
            <person name="Kyrpides N."/>
            <person name="Ivanova N."/>
            <person name="Pinto A."/>
            <person name="Currie C."/>
            <person name="Woyke T."/>
        </authorList>
    </citation>
    <scope>NUCLEOTIDE SEQUENCE [LARGE SCALE GENOMIC DNA]</scope>
    <source>
        <strain>At-22</strain>
    </source>
</reference>
<organism>
    <name type="scientific">Klebsiella variicola (strain At-22)</name>
    <dbReference type="NCBI Taxonomy" id="640131"/>
    <lineage>
        <taxon>Bacteria</taxon>
        <taxon>Pseudomonadati</taxon>
        <taxon>Pseudomonadota</taxon>
        <taxon>Gammaproteobacteria</taxon>
        <taxon>Enterobacterales</taxon>
        <taxon>Enterobacteriaceae</taxon>
        <taxon>Klebsiella/Raoultella group</taxon>
        <taxon>Klebsiella</taxon>
        <taxon>Klebsiella pneumoniae complex</taxon>
    </lineage>
</organism>
<dbReference type="EC" id="1.5.1.42" evidence="1"/>
<dbReference type="EMBL" id="CP001891">
    <property type="protein sequence ID" value="ADC59226.1"/>
    <property type="molecule type" value="Genomic_DNA"/>
</dbReference>
<dbReference type="RefSeq" id="WP_012968592.1">
    <property type="nucleotide sequence ID" value="NC_013850.1"/>
</dbReference>
<dbReference type="SMR" id="D3RKL5"/>
<dbReference type="KEGG" id="kva:Kvar_3346"/>
<dbReference type="HOGENOM" id="CLU_059021_2_2_6"/>
<dbReference type="GO" id="GO:0010181">
    <property type="term" value="F:FMN binding"/>
    <property type="evidence" value="ECO:0007669"/>
    <property type="project" value="InterPro"/>
</dbReference>
<dbReference type="GO" id="GO:0052874">
    <property type="term" value="F:FMN reductase (NADH) activity"/>
    <property type="evidence" value="ECO:0007669"/>
    <property type="project" value="UniProtKB-EC"/>
</dbReference>
<dbReference type="GO" id="GO:0008752">
    <property type="term" value="F:FMN reductase [NAD(P)H] activity"/>
    <property type="evidence" value="ECO:0007669"/>
    <property type="project" value="InterPro"/>
</dbReference>
<dbReference type="GO" id="GO:0042602">
    <property type="term" value="F:riboflavin reductase (NADPH) activity"/>
    <property type="evidence" value="ECO:0007669"/>
    <property type="project" value="UniProtKB-UniRule"/>
</dbReference>
<dbReference type="GO" id="GO:0019740">
    <property type="term" value="P:nitrogen utilization"/>
    <property type="evidence" value="ECO:0007669"/>
    <property type="project" value="UniProtKB-UniRule"/>
</dbReference>
<dbReference type="GO" id="GO:0006212">
    <property type="term" value="P:uracil catabolic process"/>
    <property type="evidence" value="ECO:0007669"/>
    <property type="project" value="UniProtKB-UniRule"/>
</dbReference>
<dbReference type="FunFam" id="2.30.110.10:FF:000002">
    <property type="entry name" value="FMN reductase (NADH) RutF"/>
    <property type="match status" value="1"/>
</dbReference>
<dbReference type="Gene3D" id="2.30.110.10">
    <property type="entry name" value="Electron Transport, Fmn-binding Protein, Chain A"/>
    <property type="match status" value="1"/>
</dbReference>
<dbReference type="HAMAP" id="MF_00833">
    <property type="entry name" value="RutF"/>
    <property type="match status" value="1"/>
</dbReference>
<dbReference type="InterPro" id="IPR002563">
    <property type="entry name" value="Flavin_Rdtase-like_dom"/>
</dbReference>
<dbReference type="InterPro" id="IPR050268">
    <property type="entry name" value="NADH-dep_flavin_reductase"/>
</dbReference>
<dbReference type="InterPro" id="IPR019917">
    <property type="entry name" value="RutF"/>
</dbReference>
<dbReference type="InterPro" id="IPR012349">
    <property type="entry name" value="Split_barrel_FMN-bd"/>
</dbReference>
<dbReference type="NCBIfam" id="TIGR03615">
    <property type="entry name" value="RutF"/>
    <property type="match status" value="1"/>
</dbReference>
<dbReference type="PANTHER" id="PTHR30466">
    <property type="entry name" value="FLAVIN REDUCTASE"/>
    <property type="match status" value="1"/>
</dbReference>
<dbReference type="PANTHER" id="PTHR30466:SF1">
    <property type="entry name" value="FMN REDUCTASE (NADH) RUTF"/>
    <property type="match status" value="1"/>
</dbReference>
<dbReference type="Pfam" id="PF01613">
    <property type="entry name" value="Flavin_Reduct"/>
    <property type="match status" value="1"/>
</dbReference>
<dbReference type="SMART" id="SM00903">
    <property type="entry name" value="Flavin_Reduct"/>
    <property type="match status" value="1"/>
</dbReference>
<dbReference type="SUPFAM" id="SSF50475">
    <property type="entry name" value="FMN-binding split barrel"/>
    <property type="match status" value="1"/>
</dbReference>
<proteinExistence type="inferred from homology"/>
<evidence type="ECO:0000255" key="1">
    <source>
        <dbReference type="HAMAP-Rule" id="MF_00833"/>
    </source>
</evidence>
<name>RUTF_KLEVT</name>